<protein>
    <recommendedName>
        <fullName evidence="1">Dual-action ribosomal maturation protein DarP</fullName>
    </recommendedName>
    <alternativeName>
        <fullName evidence="1">Large ribosomal subunit assembly factor DarP</fullName>
    </alternativeName>
</protein>
<proteinExistence type="inferred from homology"/>
<feature type="chain" id="PRO_1000198374" description="Dual-action ribosomal maturation protein DarP">
    <location>
        <begin position="1"/>
        <end position="176"/>
    </location>
</feature>
<accession>B3GXG6</accession>
<name>DARP_ACTP7</name>
<keyword id="KW-0963">Cytoplasm</keyword>
<keyword id="KW-0690">Ribosome biogenesis</keyword>
<keyword id="KW-0694">RNA-binding</keyword>
<keyword id="KW-0699">rRNA-binding</keyword>
<reference key="1">
    <citation type="submission" date="2008-06" db="EMBL/GenBank/DDBJ databases">
        <title>Genome and proteome analysis of A. pleuropneumoniae serotype 7.</title>
        <authorList>
            <person name="Linke B."/>
            <person name="Buettner F."/>
            <person name="Martinez-Arias R."/>
            <person name="Goesmann A."/>
            <person name="Baltes N."/>
            <person name="Tegetmeyer H."/>
            <person name="Singh M."/>
            <person name="Gerlach G.F."/>
        </authorList>
    </citation>
    <scope>NUCLEOTIDE SEQUENCE [LARGE SCALE GENOMIC DNA]</scope>
    <source>
        <strain>AP76</strain>
    </source>
</reference>
<organism>
    <name type="scientific">Actinobacillus pleuropneumoniae serotype 7 (strain AP76)</name>
    <dbReference type="NCBI Taxonomy" id="537457"/>
    <lineage>
        <taxon>Bacteria</taxon>
        <taxon>Pseudomonadati</taxon>
        <taxon>Pseudomonadota</taxon>
        <taxon>Gammaproteobacteria</taxon>
        <taxon>Pasteurellales</taxon>
        <taxon>Pasteurellaceae</taxon>
        <taxon>Actinobacillus</taxon>
    </lineage>
</organism>
<sequence>MAKKRSKNEIDWTDEEEEIIWVSKSEIKRDSEHLKKLGAELIELTPQNLEKIPLDDDLKDAIRQAQSFKLEARRRQIQFIGKLLRNRDPEPIQEALDKVKNRHNQQQALLHKLELVRDQLVNMGDSSLEHLLTEHPQLDRQHLRNLIRGAQKEREANKPPKNYREIFQYLKTEIAE</sequence>
<dbReference type="EMBL" id="CP001091">
    <property type="protein sequence ID" value="ACE61425.1"/>
    <property type="molecule type" value="Genomic_DNA"/>
</dbReference>
<dbReference type="RefSeq" id="WP_005607621.1">
    <property type="nucleotide sequence ID" value="NC_010939.1"/>
</dbReference>
<dbReference type="SMR" id="B3GXG6"/>
<dbReference type="KEGG" id="apa:APP7_0773"/>
<dbReference type="HOGENOM" id="CLU_106757_2_0_6"/>
<dbReference type="Proteomes" id="UP000001226">
    <property type="component" value="Chromosome"/>
</dbReference>
<dbReference type="GO" id="GO:0005829">
    <property type="term" value="C:cytosol"/>
    <property type="evidence" value="ECO:0007669"/>
    <property type="project" value="TreeGrafter"/>
</dbReference>
<dbReference type="GO" id="GO:0043022">
    <property type="term" value="F:ribosome binding"/>
    <property type="evidence" value="ECO:0007669"/>
    <property type="project" value="UniProtKB-UniRule"/>
</dbReference>
<dbReference type="GO" id="GO:0019843">
    <property type="term" value="F:rRNA binding"/>
    <property type="evidence" value="ECO:0007669"/>
    <property type="project" value="UniProtKB-UniRule"/>
</dbReference>
<dbReference type="GO" id="GO:1902626">
    <property type="term" value="P:assembly of large subunit precursor of preribosome"/>
    <property type="evidence" value="ECO:0007669"/>
    <property type="project" value="UniProtKB-UniRule"/>
</dbReference>
<dbReference type="CDD" id="cd16331">
    <property type="entry name" value="YjgA-like"/>
    <property type="match status" value="1"/>
</dbReference>
<dbReference type="FunFam" id="1.10.60.30:FF:000001">
    <property type="entry name" value="UPF0307 protein YjgA"/>
    <property type="match status" value="1"/>
</dbReference>
<dbReference type="Gene3D" id="1.10.60.30">
    <property type="entry name" value="PSPTO4464-like domains"/>
    <property type="match status" value="2"/>
</dbReference>
<dbReference type="HAMAP" id="MF_00765">
    <property type="entry name" value="DarP"/>
    <property type="match status" value="1"/>
</dbReference>
<dbReference type="InterPro" id="IPR006839">
    <property type="entry name" value="DarP"/>
</dbReference>
<dbReference type="InterPro" id="IPR023153">
    <property type="entry name" value="DarP_sf"/>
</dbReference>
<dbReference type="NCBIfam" id="NF003593">
    <property type="entry name" value="PRK05255.1-1"/>
    <property type="match status" value="1"/>
</dbReference>
<dbReference type="PANTHER" id="PTHR38101">
    <property type="entry name" value="UPF0307 PROTEIN YJGA"/>
    <property type="match status" value="1"/>
</dbReference>
<dbReference type="PANTHER" id="PTHR38101:SF1">
    <property type="entry name" value="UPF0307 PROTEIN YJGA"/>
    <property type="match status" value="1"/>
</dbReference>
<dbReference type="Pfam" id="PF04751">
    <property type="entry name" value="DarP"/>
    <property type="match status" value="1"/>
</dbReference>
<dbReference type="PIRSF" id="PIRSF016183">
    <property type="entry name" value="UCP016183"/>
    <property type="match status" value="1"/>
</dbReference>
<dbReference type="SUPFAM" id="SSF158710">
    <property type="entry name" value="PSPTO4464-like"/>
    <property type="match status" value="1"/>
</dbReference>
<evidence type="ECO:0000255" key="1">
    <source>
        <dbReference type="HAMAP-Rule" id="MF_00765"/>
    </source>
</evidence>
<gene>
    <name evidence="1" type="primary">darP</name>
    <name type="ordered locus">APP7_0773</name>
</gene>
<comment type="function">
    <text evidence="1">Member of a network of 50S ribosomal subunit biogenesis factors which assembles along the 30S-50S interface, preventing incorrect 23S rRNA structures from forming. Promotes peptidyl transferase center (PTC) maturation.</text>
</comment>
<comment type="subcellular location">
    <subcellularLocation>
        <location evidence="1">Cytoplasm</location>
    </subcellularLocation>
    <text evidence="1">Associates with late stage pre-50S ribosomal subunits.</text>
</comment>
<comment type="similarity">
    <text evidence="1">Belongs to the DarP family.</text>
</comment>